<protein>
    <recommendedName>
        <fullName evidence="1">Probable transcriptional regulatory protein Bcen_1682</fullName>
    </recommendedName>
</protein>
<reference key="1">
    <citation type="submission" date="2006-05" db="EMBL/GenBank/DDBJ databases">
        <title>Complete sequence of chromosome 1 of Burkholderia cenocepacia AU 1054.</title>
        <authorList>
            <consortium name="US DOE Joint Genome Institute"/>
            <person name="Copeland A."/>
            <person name="Lucas S."/>
            <person name="Lapidus A."/>
            <person name="Barry K."/>
            <person name="Detter J.C."/>
            <person name="Glavina del Rio T."/>
            <person name="Hammon N."/>
            <person name="Israni S."/>
            <person name="Dalin E."/>
            <person name="Tice H."/>
            <person name="Pitluck S."/>
            <person name="Chain P."/>
            <person name="Malfatti S."/>
            <person name="Shin M."/>
            <person name="Vergez L."/>
            <person name="Schmutz J."/>
            <person name="Larimer F."/>
            <person name="Land M."/>
            <person name="Hauser L."/>
            <person name="Kyrpides N."/>
            <person name="Lykidis A."/>
            <person name="LiPuma J.J."/>
            <person name="Konstantinidis K."/>
            <person name="Tiedje J.M."/>
            <person name="Richardson P."/>
        </authorList>
    </citation>
    <scope>NUCLEOTIDE SEQUENCE [LARGE SCALE GENOMIC DNA]</scope>
    <source>
        <strain>AU 1054</strain>
    </source>
</reference>
<sequence>MAGHSKWANIKHKKAAADAKRGKIWTRLIKEIQVAARLGGGDVNSNPRLRLAVDKAADANMPKDNVKRAIDRGVGGADGANYEEIRYEGYGISGAAIIVDTLTDNRTRTVAEVRHAFSKFGGNMGTDGSVAFMFDHVGQFLFAPGTSEDALMEAALEAGANDVNTNDDGSIEVLCDWQAFSAVKDALEAAGFKAELAEVTMKPQNEVEFTGDDAAKMQKLLDALENLDDVQDVYTNAVIVEE</sequence>
<dbReference type="EMBL" id="CP000378">
    <property type="protein sequence ID" value="ABF76586.1"/>
    <property type="molecule type" value="Genomic_DNA"/>
</dbReference>
<dbReference type="SMR" id="Q1BUW9"/>
<dbReference type="HOGENOM" id="CLU_062974_2_2_4"/>
<dbReference type="GO" id="GO:0005829">
    <property type="term" value="C:cytosol"/>
    <property type="evidence" value="ECO:0007669"/>
    <property type="project" value="TreeGrafter"/>
</dbReference>
<dbReference type="GO" id="GO:0003677">
    <property type="term" value="F:DNA binding"/>
    <property type="evidence" value="ECO:0007669"/>
    <property type="project" value="UniProtKB-UniRule"/>
</dbReference>
<dbReference type="GO" id="GO:0006355">
    <property type="term" value="P:regulation of DNA-templated transcription"/>
    <property type="evidence" value="ECO:0007669"/>
    <property type="project" value="UniProtKB-UniRule"/>
</dbReference>
<dbReference type="FunFam" id="1.10.10.200:FF:000001">
    <property type="entry name" value="Probable transcriptional regulatory protein YebC"/>
    <property type="match status" value="1"/>
</dbReference>
<dbReference type="FunFam" id="3.30.70.980:FF:000002">
    <property type="entry name" value="Probable transcriptional regulatory protein YebC"/>
    <property type="match status" value="1"/>
</dbReference>
<dbReference type="Gene3D" id="1.10.10.200">
    <property type="match status" value="1"/>
</dbReference>
<dbReference type="Gene3D" id="3.30.70.980">
    <property type="match status" value="2"/>
</dbReference>
<dbReference type="HAMAP" id="MF_00693">
    <property type="entry name" value="Transcrip_reg_TACO1"/>
    <property type="match status" value="1"/>
</dbReference>
<dbReference type="InterPro" id="IPR017856">
    <property type="entry name" value="Integrase-like_N"/>
</dbReference>
<dbReference type="InterPro" id="IPR048300">
    <property type="entry name" value="TACO1_YebC-like_2nd/3rd_dom"/>
</dbReference>
<dbReference type="InterPro" id="IPR049083">
    <property type="entry name" value="TACO1_YebC_N"/>
</dbReference>
<dbReference type="InterPro" id="IPR002876">
    <property type="entry name" value="Transcrip_reg_TACO1-like"/>
</dbReference>
<dbReference type="InterPro" id="IPR026564">
    <property type="entry name" value="Transcrip_reg_TACO1-like_dom3"/>
</dbReference>
<dbReference type="InterPro" id="IPR029072">
    <property type="entry name" value="YebC-like"/>
</dbReference>
<dbReference type="NCBIfam" id="NF001030">
    <property type="entry name" value="PRK00110.1"/>
    <property type="match status" value="1"/>
</dbReference>
<dbReference type="NCBIfam" id="NF009044">
    <property type="entry name" value="PRK12378.1"/>
    <property type="match status" value="1"/>
</dbReference>
<dbReference type="NCBIfam" id="TIGR01033">
    <property type="entry name" value="YebC/PmpR family DNA-binding transcriptional regulator"/>
    <property type="match status" value="1"/>
</dbReference>
<dbReference type="PANTHER" id="PTHR12532:SF6">
    <property type="entry name" value="TRANSCRIPTIONAL REGULATORY PROTEIN YEBC-RELATED"/>
    <property type="match status" value="1"/>
</dbReference>
<dbReference type="PANTHER" id="PTHR12532">
    <property type="entry name" value="TRANSLATIONAL ACTIVATOR OF CYTOCHROME C OXIDASE 1"/>
    <property type="match status" value="1"/>
</dbReference>
<dbReference type="Pfam" id="PF20772">
    <property type="entry name" value="TACO1_YebC_N"/>
    <property type="match status" value="1"/>
</dbReference>
<dbReference type="Pfam" id="PF01709">
    <property type="entry name" value="Transcrip_reg"/>
    <property type="match status" value="1"/>
</dbReference>
<dbReference type="SUPFAM" id="SSF75625">
    <property type="entry name" value="YebC-like"/>
    <property type="match status" value="1"/>
</dbReference>
<accession>Q1BUW9</accession>
<organism>
    <name type="scientific">Burkholderia orbicola (strain AU 1054)</name>
    <dbReference type="NCBI Taxonomy" id="331271"/>
    <lineage>
        <taxon>Bacteria</taxon>
        <taxon>Pseudomonadati</taxon>
        <taxon>Pseudomonadota</taxon>
        <taxon>Betaproteobacteria</taxon>
        <taxon>Burkholderiales</taxon>
        <taxon>Burkholderiaceae</taxon>
        <taxon>Burkholderia</taxon>
        <taxon>Burkholderia cepacia complex</taxon>
        <taxon>Burkholderia orbicola</taxon>
    </lineage>
</organism>
<evidence type="ECO:0000255" key="1">
    <source>
        <dbReference type="HAMAP-Rule" id="MF_00693"/>
    </source>
</evidence>
<feature type="chain" id="PRO_0000257036" description="Probable transcriptional regulatory protein Bcen_1682">
    <location>
        <begin position="1"/>
        <end position="242"/>
    </location>
</feature>
<keyword id="KW-0963">Cytoplasm</keyword>
<keyword id="KW-0238">DNA-binding</keyword>
<keyword id="KW-0804">Transcription</keyword>
<keyword id="KW-0805">Transcription regulation</keyword>
<proteinExistence type="inferred from homology"/>
<gene>
    <name type="ordered locus">Bcen_1682</name>
</gene>
<comment type="subcellular location">
    <subcellularLocation>
        <location evidence="1">Cytoplasm</location>
    </subcellularLocation>
</comment>
<comment type="similarity">
    <text evidence="1">Belongs to the TACO1 family.</text>
</comment>
<name>Y1682_BURO1</name>